<comment type="similarity">
    <text evidence="1">Belongs to the eukaryotic ribosomal protein eS28 family.</text>
</comment>
<organism>
    <name type="scientific">Sulfolobus acidocaldarius (strain ATCC 33909 / DSM 639 / JCM 8929 / NBRC 15157 / NCIMB 11770)</name>
    <dbReference type="NCBI Taxonomy" id="330779"/>
    <lineage>
        <taxon>Archaea</taxon>
        <taxon>Thermoproteota</taxon>
        <taxon>Thermoprotei</taxon>
        <taxon>Sulfolobales</taxon>
        <taxon>Sulfolobaceae</taxon>
        <taxon>Sulfolobus</taxon>
    </lineage>
</organism>
<reference key="1">
    <citation type="journal article" date="2005" name="J. Bacteriol.">
        <title>The genome of Sulfolobus acidocaldarius, a model organism of the Crenarchaeota.</title>
        <authorList>
            <person name="Chen L."/>
            <person name="Bruegger K."/>
            <person name="Skovgaard M."/>
            <person name="Redder P."/>
            <person name="She Q."/>
            <person name="Torarinsson E."/>
            <person name="Greve B."/>
            <person name="Awayez M."/>
            <person name="Zibat A."/>
            <person name="Klenk H.-P."/>
            <person name="Garrett R.A."/>
        </authorList>
    </citation>
    <scope>NUCLEOTIDE SEQUENCE [LARGE SCALE GENOMIC DNA]</scope>
    <source>
        <strain>ATCC 33909 / DSM 639 / JCM 8929 / NBRC 15157 / NCIMB 11770</strain>
    </source>
</reference>
<feature type="chain" id="PRO_0000136860" description="Small ribosomal subunit protein eS28">
    <location>
        <begin position="1"/>
        <end position="84"/>
    </location>
</feature>
<evidence type="ECO:0000255" key="1">
    <source>
        <dbReference type="HAMAP-Rule" id="MF_00292"/>
    </source>
</evidence>
<evidence type="ECO:0000305" key="2"/>
<keyword id="KW-0002">3D-structure</keyword>
<keyword id="KW-1185">Reference proteome</keyword>
<keyword id="KW-0687">Ribonucleoprotein</keyword>
<keyword id="KW-0689">Ribosomal protein</keyword>
<gene>
    <name evidence="1" type="primary">rps28e</name>
    <name type="ordered locus">Saci_0698</name>
</gene>
<accession>Q4JAV1</accession>
<dbReference type="EMBL" id="CP000077">
    <property type="protein sequence ID" value="AAY80078.1"/>
    <property type="molecule type" value="Genomic_DNA"/>
</dbReference>
<dbReference type="RefSeq" id="WP_011277580.1">
    <property type="nucleotide sequence ID" value="NC_007181.1"/>
</dbReference>
<dbReference type="PDB" id="8HKX">
    <property type="method" value="EM"/>
    <property type="resolution" value="3.14 A"/>
    <property type="chains" value="S28E=19-81"/>
</dbReference>
<dbReference type="PDB" id="8HKY">
    <property type="method" value="EM"/>
    <property type="resolution" value="4.45 A"/>
    <property type="chains" value="S28E=19-81"/>
</dbReference>
<dbReference type="PDB" id="8HKZ">
    <property type="method" value="EM"/>
    <property type="resolution" value="4.78 A"/>
    <property type="chains" value="S28E=19-81"/>
</dbReference>
<dbReference type="PDB" id="8HL1">
    <property type="method" value="EM"/>
    <property type="resolution" value="3.93 A"/>
    <property type="chains" value="S28E=19-81"/>
</dbReference>
<dbReference type="PDB" id="8HL2">
    <property type="method" value="EM"/>
    <property type="resolution" value="4.10 A"/>
    <property type="chains" value="S28E=19-81"/>
</dbReference>
<dbReference type="PDB" id="8HL3">
    <property type="method" value="EM"/>
    <property type="resolution" value="4.80 A"/>
    <property type="chains" value="S28E=19-81"/>
</dbReference>
<dbReference type="PDB" id="8HL4">
    <property type="method" value="EM"/>
    <property type="resolution" value="4.62 A"/>
    <property type="chains" value="S28E=19-81"/>
</dbReference>
<dbReference type="PDB" id="8HL5">
    <property type="method" value="EM"/>
    <property type="resolution" value="5.72 A"/>
    <property type="chains" value="S28E=19-81"/>
</dbReference>
<dbReference type="PDB" id="8WKP">
    <property type="method" value="EM"/>
    <property type="resolution" value="4.62 A"/>
    <property type="chains" value="S28E=19-81"/>
</dbReference>
<dbReference type="PDB" id="8WQ2">
    <property type="method" value="EM"/>
    <property type="resolution" value="4.10 A"/>
    <property type="chains" value="S28E=19-81"/>
</dbReference>
<dbReference type="PDB" id="8WQ4">
    <property type="method" value="EM"/>
    <property type="resolution" value="4.53 A"/>
    <property type="chains" value="S28E=19-81"/>
</dbReference>
<dbReference type="PDBsum" id="8HKX"/>
<dbReference type="PDBsum" id="8HKY"/>
<dbReference type="PDBsum" id="8HKZ"/>
<dbReference type="PDBsum" id="8HL1"/>
<dbReference type="PDBsum" id="8HL2"/>
<dbReference type="PDBsum" id="8HL3"/>
<dbReference type="PDBsum" id="8HL4"/>
<dbReference type="PDBsum" id="8HL5"/>
<dbReference type="PDBsum" id="8WKP"/>
<dbReference type="PDBsum" id="8WQ2"/>
<dbReference type="PDBsum" id="8WQ4"/>
<dbReference type="EMDB" id="EMD-34862"/>
<dbReference type="EMDB" id="EMD-34863"/>
<dbReference type="EMDB" id="EMD-34864"/>
<dbReference type="EMDB" id="EMD-34866"/>
<dbReference type="EMDB" id="EMD-34867"/>
<dbReference type="EMDB" id="EMD-34868"/>
<dbReference type="EMDB" id="EMD-34869"/>
<dbReference type="EMDB" id="EMD-34870"/>
<dbReference type="EMDB" id="EMD-37604"/>
<dbReference type="EMDB" id="EMD-37733"/>
<dbReference type="EMDB" id="EMD-37734"/>
<dbReference type="SMR" id="Q4JAV1"/>
<dbReference type="STRING" id="330779.Saci_0698"/>
<dbReference type="GeneID" id="14551213"/>
<dbReference type="KEGG" id="sai:Saci_0698"/>
<dbReference type="PATRIC" id="fig|330779.12.peg.666"/>
<dbReference type="eggNOG" id="arCOG04314">
    <property type="taxonomic scope" value="Archaea"/>
</dbReference>
<dbReference type="HOGENOM" id="CLU_178987_2_1_2"/>
<dbReference type="Proteomes" id="UP000001018">
    <property type="component" value="Chromosome"/>
</dbReference>
<dbReference type="GO" id="GO:0022627">
    <property type="term" value="C:cytosolic small ribosomal subunit"/>
    <property type="evidence" value="ECO:0007669"/>
    <property type="project" value="TreeGrafter"/>
</dbReference>
<dbReference type="GO" id="GO:0003735">
    <property type="term" value="F:structural constituent of ribosome"/>
    <property type="evidence" value="ECO:0007669"/>
    <property type="project" value="InterPro"/>
</dbReference>
<dbReference type="GO" id="GO:0030490">
    <property type="term" value="P:maturation of SSU-rRNA"/>
    <property type="evidence" value="ECO:0007669"/>
    <property type="project" value="TreeGrafter"/>
</dbReference>
<dbReference type="GO" id="GO:0000028">
    <property type="term" value="P:ribosomal small subunit assembly"/>
    <property type="evidence" value="ECO:0007669"/>
    <property type="project" value="TreeGrafter"/>
</dbReference>
<dbReference type="GO" id="GO:0006412">
    <property type="term" value="P:translation"/>
    <property type="evidence" value="ECO:0007669"/>
    <property type="project" value="UniProtKB-UniRule"/>
</dbReference>
<dbReference type="CDD" id="cd04457">
    <property type="entry name" value="S1_S28E"/>
    <property type="match status" value="1"/>
</dbReference>
<dbReference type="FunFam" id="2.40.50.140:FF:000145">
    <property type="entry name" value="30S ribosomal protein S28e"/>
    <property type="match status" value="1"/>
</dbReference>
<dbReference type="Gene3D" id="2.40.50.140">
    <property type="entry name" value="Nucleic acid-binding proteins"/>
    <property type="match status" value="1"/>
</dbReference>
<dbReference type="HAMAP" id="MF_00292">
    <property type="entry name" value="Ribosomal_eS28"/>
    <property type="match status" value="1"/>
</dbReference>
<dbReference type="InterPro" id="IPR012340">
    <property type="entry name" value="NA-bd_OB-fold"/>
</dbReference>
<dbReference type="InterPro" id="IPR000289">
    <property type="entry name" value="Ribosomal_eS28"/>
</dbReference>
<dbReference type="InterPro" id="IPR028626">
    <property type="entry name" value="Ribosomal_eS28_CS"/>
</dbReference>
<dbReference type="NCBIfam" id="NF003080">
    <property type="entry name" value="PRK04007.1"/>
    <property type="match status" value="1"/>
</dbReference>
<dbReference type="PANTHER" id="PTHR10769">
    <property type="entry name" value="40S RIBOSOMAL PROTEIN S28"/>
    <property type="match status" value="1"/>
</dbReference>
<dbReference type="PANTHER" id="PTHR10769:SF3">
    <property type="entry name" value="SMALL RIBOSOMAL SUBUNIT PROTEIN ES28"/>
    <property type="match status" value="1"/>
</dbReference>
<dbReference type="Pfam" id="PF01200">
    <property type="entry name" value="Ribosomal_S28e"/>
    <property type="match status" value="1"/>
</dbReference>
<dbReference type="SUPFAM" id="SSF50249">
    <property type="entry name" value="Nucleic acid-binding proteins"/>
    <property type="match status" value="1"/>
</dbReference>
<dbReference type="PROSITE" id="PS00961">
    <property type="entry name" value="RIBOSOMAL_S28E"/>
    <property type="match status" value="1"/>
</dbReference>
<protein>
    <recommendedName>
        <fullName evidence="1">Small ribosomal subunit protein eS28</fullName>
    </recommendedName>
    <alternativeName>
        <fullName evidence="2">30S ribosomal protein S28e</fullName>
    </alternativeName>
</protein>
<name>RS28_SULAC</name>
<sequence>MSEKEKSSTTTSSVIDEFGFPAEVIQILDRTGVTGEVTQVRVRVLEGRDKGRILTRNVKGPVRLGDILILRETEREARKLSTKR</sequence>
<proteinExistence type="evidence at protein level"/>